<keyword id="KW-1185">Reference proteome</keyword>
<gene>
    <name type="primary">yoqN</name>
    <name type="ordered locus">BSU20570</name>
</gene>
<accession>O31924</accession>
<protein>
    <recommendedName>
        <fullName>SPbeta prophage-derived uncharacterized protein YoqN</fullName>
    </recommendedName>
</protein>
<name>YOQN_BACSU</name>
<dbReference type="EMBL" id="AL009126">
    <property type="protein sequence ID" value="CAB13949.1"/>
    <property type="molecule type" value="Genomic_DNA"/>
</dbReference>
<dbReference type="RefSeq" id="NP_389939.1">
    <property type="nucleotide sequence ID" value="NC_000964.3"/>
</dbReference>
<dbReference type="RefSeq" id="WP_004399461.1">
    <property type="nucleotide sequence ID" value="NZ_OZ025638.1"/>
</dbReference>
<dbReference type="SMR" id="O31924"/>
<dbReference type="FunCoup" id="O31924">
    <property type="interactions" value="27"/>
</dbReference>
<dbReference type="STRING" id="224308.BSU20570"/>
<dbReference type="PaxDb" id="224308-BSU20570"/>
<dbReference type="EnsemblBacteria" id="CAB13949">
    <property type="protein sequence ID" value="CAB13949"/>
    <property type="gene ID" value="BSU_20570"/>
</dbReference>
<dbReference type="GeneID" id="936507"/>
<dbReference type="KEGG" id="bsu:BSU20570"/>
<dbReference type="InParanoid" id="O31924"/>
<dbReference type="OrthoDB" id="2901631at2"/>
<dbReference type="BioCyc" id="BSUB:BSU20570-MONOMER"/>
<dbReference type="Proteomes" id="UP000001570">
    <property type="component" value="Chromosome"/>
</dbReference>
<proteinExistence type="predicted"/>
<reference key="1">
    <citation type="journal article" date="1997" name="Nature">
        <title>The complete genome sequence of the Gram-positive bacterium Bacillus subtilis.</title>
        <authorList>
            <person name="Kunst F."/>
            <person name="Ogasawara N."/>
            <person name="Moszer I."/>
            <person name="Albertini A.M."/>
            <person name="Alloni G."/>
            <person name="Azevedo V."/>
            <person name="Bertero M.G."/>
            <person name="Bessieres P."/>
            <person name="Bolotin A."/>
            <person name="Borchert S."/>
            <person name="Borriss R."/>
            <person name="Boursier L."/>
            <person name="Brans A."/>
            <person name="Braun M."/>
            <person name="Brignell S.C."/>
            <person name="Bron S."/>
            <person name="Brouillet S."/>
            <person name="Bruschi C.V."/>
            <person name="Caldwell B."/>
            <person name="Capuano V."/>
            <person name="Carter N.M."/>
            <person name="Choi S.-K."/>
            <person name="Codani J.-J."/>
            <person name="Connerton I.F."/>
            <person name="Cummings N.J."/>
            <person name="Daniel R.A."/>
            <person name="Denizot F."/>
            <person name="Devine K.M."/>
            <person name="Duesterhoeft A."/>
            <person name="Ehrlich S.D."/>
            <person name="Emmerson P.T."/>
            <person name="Entian K.-D."/>
            <person name="Errington J."/>
            <person name="Fabret C."/>
            <person name="Ferrari E."/>
            <person name="Foulger D."/>
            <person name="Fritz C."/>
            <person name="Fujita M."/>
            <person name="Fujita Y."/>
            <person name="Fuma S."/>
            <person name="Galizzi A."/>
            <person name="Galleron N."/>
            <person name="Ghim S.-Y."/>
            <person name="Glaser P."/>
            <person name="Goffeau A."/>
            <person name="Golightly E.J."/>
            <person name="Grandi G."/>
            <person name="Guiseppi G."/>
            <person name="Guy B.J."/>
            <person name="Haga K."/>
            <person name="Haiech J."/>
            <person name="Harwood C.R."/>
            <person name="Henaut A."/>
            <person name="Hilbert H."/>
            <person name="Holsappel S."/>
            <person name="Hosono S."/>
            <person name="Hullo M.-F."/>
            <person name="Itaya M."/>
            <person name="Jones L.-M."/>
            <person name="Joris B."/>
            <person name="Karamata D."/>
            <person name="Kasahara Y."/>
            <person name="Klaerr-Blanchard M."/>
            <person name="Klein C."/>
            <person name="Kobayashi Y."/>
            <person name="Koetter P."/>
            <person name="Koningstein G."/>
            <person name="Krogh S."/>
            <person name="Kumano M."/>
            <person name="Kurita K."/>
            <person name="Lapidus A."/>
            <person name="Lardinois S."/>
            <person name="Lauber J."/>
            <person name="Lazarevic V."/>
            <person name="Lee S.-M."/>
            <person name="Levine A."/>
            <person name="Liu H."/>
            <person name="Masuda S."/>
            <person name="Mauel C."/>
            <person name="Medigue C."/>
            <person name="Medina N."/>
            <person name="Mellado R.P."/>
            <person name="Mizuno M."/>
            <person name="Moestl D."/>
            <person name="Nakai S."/>
            <person name="Noback M."/>
            <person name="Noone D."/>
            <person name="O'Reilly M."/>
            <person name="Ogawa K."/>
            <person name="Ogiwara A."/>
            <person name="Oudega B."/>
            <person name="Park S.-H."/>
            <person name="Parro V."/>
            <person name="Pohl T.M."/>
            <person name="Portetelle D."/>
            <person name="Porwollik S."/>
            <person name="Prescott A.M."/>
            <person name="Presecan E."/>
            <person name="Pujic P."/>
            <person name="Purnelle B."/>
            <person name="Rapoport G."/>
            <person name="Rey M."/>
            <person name="Reynolds S."/>
            <person name="Rieger M."/>
            <person name="Rivolta C."/>
            <person name="Rocha E."/>
            <person name="Roche B."/>
            <person name="Rose M."/>
            <person name="Sadaie Y."/>
            <person name="Sato T."/>
            <person name="Scanlan E."/>
            <person name="Schleich S."/>
            <person name="Schroeter R."/>
            <person name="Scoffone F."/>
            <person name="Sekiguchi J."/>
            <person name="Sekowska A."/>
            <person name="Seror S.J."/>
            <person name="Serror P."/>
            <person name="Shin B.-S."/>
            <person name="Soldo B."/>
            <person name="Sorokin A."/>
            <person name="Tacconi E."/>
            <person name="Takagi T."/>
            <person name="Takahashi H."/>
            <person name="Takemaru K."/>
            <person name="Takeuchi M."/>
            <person name="Tamakoshi A."/>
            <person name="Tanaka T."/>
            <person name="Terpstra P."/>
            <person name="Tognoni A."/>
            <person name="Tosato V."/>
            <person name="Uchiyama S."/>
            <person name="Vandenbol M."/>
            <person name="Vannier F."/>
            <person name="Vassarotti A."/>
            <person name="Viari A."/>
            <person name="Wambutt R."/>
            <person name="Wedler E."/>
            <person name="Wedler H."/>
            <person name="Weitzenegger T."/>
            <person name="Winters P."/>
            <person name="Wipat A."/>
            <person name="Yamamoto H."/>
            <person name="Yamane K."/>
            <person name="Yasumoto K."/>
            <person name="Yata K."/>
            <person name="Yoshida K."/>
            <person name="Yoshikawa H.-F."/>
            <person name="Zumstein E."/>
            <person name="Yoshikawa H."/>
            <person name="Danchin A."/>
        </authorList>
    </citation>
    <scope>NUCLEOTIDE SEQUENCE [LARGE SCALE GENOMIC DNA]</scope>
    <source>
        <strain>168</strain>
    </source>
</reference>
<sequence length="72" mass="8382">MVIKRNLLSNHVDEIIGEYYAAKGYSVHSIDRQENGQLIVVTERVAEEKENAKVDIAFDFVHRRPHKKKYLA</sequence>
<feature type="chain" id="PRO_0000360471" description="SPbeta prophage-derived uncharacterized protein YoqN">
    <location>
        <begin position="1"/>
        <end position="72"/>
    </location>
</feature>
<organism>
    <name type="scientific">Bacillus subtilis (strain 168)</name>
    <dbReference type="NCBI Taxonomy" id="224308"/>
    <lineage>
        <taxon>Bacteria</taxon>
        <taxon>Bacillati</taxon>
        <taxon>Bacillota</taxon>
        <taxon>Bacilli</taxon>
        <taxon>Bacillales</taxon>
        <taxon>Bacillaceae</taxon>
        <taxon>Bacillus</taxon>
    </lineage>
</organism>